<evidence type="ECO:0000250" key="1"/>
<evidence type="ECO:0000255" key="2"/>
<evidence type="ECO:0000305" key="3"/>
<gene>
    <name type="primary">brz</name>
    <name type="ordered locus">Huta_0320</name>
</gene>
<reference key="1">
    <citation type="journal article" date="2009" name="Stand. Genomic Sci.">
        <title>Complete genome sequence of Halorhabdus utahensis type strain (AX-2).</title>
        <authorList>
            <person name="Anderson I."/>
            <person name="Tindall B.J."/>
            <person name="Pomrenke H."/>
            <person name="Goker M."/>
            <person name="Lapidus A."/>
            <person name="Nolan M."/>
            <person name="Copeland A."/>
            <person name="Glavina Del Rio T."/>
            <person name="Chen F."/>
            <person name="Tice H."/>
            <person name="Cheng J.F."/>
            <person name="Lucas S."/>
            <person name="Chertkov O."/>
            <person name="Bruce D."/>
            <person name="Brettin T."/>
            <person name="Detter J.C."/>
            <person name="Han C."/>
            <person name="Goodwin L."/>
            <person name="Land M."/>
            <person name="Hauser L."/>
            <person name="Chang Y.J."/>
            <person name="Jeffries C.D."/>
            <person name="Pitluck S."/>
            <person name="Pati A."/>
            <person name="Mavromatis K."/>
            <person name="Ivanova N."/>
            <person name="Ovchinnikova G."/>
            <person name="Chen A."/>
            <person name="Palaniappan K."/>
            <person name="Chain P."/>
            <person name="Rohde M."/>
            <person name="Bristow J."/>
            <person name="Eisen J.A."/>
            <person name="Markowitz V."/>
            <person name="Hugenholtz P."/>
            <person name="Kyrpides N.C."/>
            <person name="Klenk H.P."/>
        </authorList>
    </citation>
    <scope>NUCLEOTIDE SEQUENCE [LARGE SCALE GENOMIC DNA]</scope>
    <source>
        <strain>DSM 12940 / JCM 11049 / AX-2</strain>
    </source>
</reference>
<sequence length="60" mass="6740">MGIEQLSCPACGATFEMGLPRDVTVQSVTTEDREEPDDDRVKVRPNACSNGHECYVMFRF</sequence>
<dbReference type="EMBL" id="CP001687">
    <property type="protein sequence ID" value="ACV10507.1"/>
    <property type="molecule type" value="Genomic_DNA"/>
</dbReference>
<dbReference type="RefSeq" id="WP_012795384.1">
    <property type="nucleotide sequence ID" value="NC_013158.1"/>
</dbReference>
<dbReference type="STRING" id="519442.Huta_0320"/>
<dbReference type="GeneID" id="8382584"/>
<dbReference type="KEGG" id="hut:Huta_0320"/>
<dbReference type="eggNOG" id="arCOG09274">
    <property type="taxonomic scope" value="Archaea"/>
</dbReference>
<dbReference type="HOGENOM" id="CLU_209475_0_0_2"/>
<dbReference type="Proteomes" id="UP000002071">
    <property type="component" value="Chromosome"/>
</dbReference>
<dbReference type="GO" id="GO:0008270">
    <property type="term" value="F:zinc ion binding"/>
    <property type="evidence" value="ECO:0007669"/>
    <property type="project" value="UniProtKB-KW"/>
</dbReference>
<dbReference type="InterPro" id="IPR053463">
    <property type="entry name" value="Brz_Regulator"/>
</dbReference>
<dbReference type="NCBIfam" id="NF041795">
    <property type="entry name" value="Brz"/>
    <property type="match status" value="1"/>
</dbReference>
<dbReference type="Pfam" id="PF23454">
    <property type="entry name" value="Zn_ribbon_Brz"/>
    <property type="match status" value="1"/>
</dbReference>
<feature type="chain" id="PRO_0000411895" description="Transcriptional regulator Brz">
    <location>
        <begin position="1"/>
        <end position="60"/>
    </location>
</feature>
<feature type="zinc finger region" description="C4-type; atypical" evidence="2">
    <location>
        <begin position="8"/>
        <end position="52"/>
    </location>
</feature>
<comment type="function">
    <text evidence="1">Activates transcription of bacteriorhodopsin (bop) and phytoene synthase (crtB1). May interact with DNA or RNA via the zinc finger motif (By similarity).</text>
</comment>
<comment type="similarity">
    <text evidence="3">Belongs to the Brz family.</text>
</comment>
<protein>
    <recommendedName>
        <fullName>Transcriptional regulator Brz</fullName>
    </recommendedName>
    <alternativeName>
        <fullName>Bacteriorhodopsin-regulating zinc finger protein</fullName>
    </alternativeName>
</protein>
<name>BRZ_HALUD</name>
<proteinExistence type="inferred from homology"/>
<organism>
    <name type="scientific">Halorhabdus utahensis (strain DSM 12940 / JCM 11049 / AX-2)</name>
    <dbReference type="NCBI Taxonomy" id="519442"/>
    <lineage>
        <taxon>Archaea</taxon>
        <taxon>Methanobacteriati</taxon>
        <taxon>Methanobacteriota</taxon>
        <taxon>Stenosarchaea group</taxon>
        <taxon>Halobacteria</taxon>
        <taxon>Halobacteriales</taxon>
        <taxon>Haloarculaceae</taxon>
        <taxon>Halorhabdus</taxon>
    </lineage>
</organism>
<accession>C7NQP8</accession>
<keyword id="KW-0010">Activator</keyword>
<keyword id="KW-0479">Metal-binding</keyword>
<keyword id="KW-1185">Reference proteome</keyword>
<keyword id="KW-0804">Transcription</keyword>
<keyword id="KW-0805">Transcription regulation</keyword>
<keyword id="KW-0862">Zinc</keyword>
<keyword id="KW-0863">Zinc-finger</keyword>